<keyword id="KW-0106">Calcium</keyword>
<keyword id="KW-0130">Cell adhesion</keyword>
<keyword id="KW-1003">Cell membrane</keyword>
<keyword id="KW-0325">Glycoprotein</keyword>
<keyword id="KW-0472">Membrane</keyword>
<keyword id="KW-0479">Metal-binding</keyword>
<keyword id="KW-0597">Phosphoprotein</keyword>
<keyword id="KW-1185">Reference proteome</keyword>
<keyword id="KW-0677">Repeat</keyword>
<keyword id="KW-0732">Signal</keyword>
<keyword id="KW-0812">Transmembrane</keyword>
<keyword id="KW-1133">Transmembrane helix</keyword>
<dbReference type="EMBL" id="AF016271">
    <property type="protein sequence ID" value="AAC34254.1"/>
    <property type="molecule type" value="mRNA"/>
</dbReference>
<dbReference type="EMBL" id="BC015251">
    <property type="protein sequence ID" value="AAH15251.1"/>
    <property type="molecule type" value="mRNA"/>
</dbReference>
<dbReference type="EMBL" id="AF118228">
    <property type="protein sequence ID" value="AAF28836.1"/>
    <property type="molecule type" value="Genomic_DNA"/>
</dbReference>
<dbReference type="CCDS" id="CCDS22583.1"/>
<dbReference type="RefSeq" id="NP_031689.1">
    <property type="nucleotide sequence ID" value="NM_007663.3"/>
</dbReference>
<dbReference type="SMR" id="O88338"/>
<dbReference type="FunCoup" id="O88338">
    <property type="interactions" value="512"/>
</dbReference>
<dbReference type="STRING" id="10090.ENSMUSP00000148478"/>
<dbReference type="GlyCosmos" id="O88338">
    <property type="glycosylation" value="3 sites, 69 glycans"/>
</dbReference>
<dbReference type="GlyGen" id="O88338">
    <property type="glycosylation" value="3 sites"/>
</dbReference>
<dbReference type="iPTMnet" id="O88338"/>
<dbReference type="PhosphoSitePlus" id="O88338"/>
<dbReference type="jPOST" id="O88338"/>
<dbReference type="PaxDb" id="10090-ENSMUSP00000129663"/>
<dbReference type="PeptideAtlas" id="O88338"/>
<dbReference type="ProteomicsDB" id="265494"/>
<dbReference type="Antibodypedia" id="29333">
    <property type="antibodies" value="671 antibodies from 31 providers"/>
</dbReference>
<dbReference type="DNASU" id="12556"/>
<dbReference type="Ensembl" id="ENSMUST00000211903.2">
    <property type="protein sequence ID" value="ENSMUSP00000148478.2"/>
    <property type="gene ID" value="ENSMUSG00000031881.7"/>
</dbReference>
<dbReference type="GeneID" id="12556"/>
<dbReference type="KEGG" id="mmu:12556"/>
<dbReference type="UCSC" id="uc009nax.2">
    <property type="organism name" value="mouse"/>
</dbReference>
<dbReference type="AGR" id="MGI:106671"/>
<dbReference type="CTD" id="1014"/>
<dbReference type="MGI" id="MGI:106671">
    <property type="gene designation" value="Cdh16"/>
</dbReference>
<dbReference type="VEuPathDB" id="HostDB:ENSMUSG00000031881"/>
<dbReference type="eggNOG" id="KOG3594">
    <property type="taxonomic scope" value="Eukaryota"/>
</dbReference>
<dbReference type="GeneTree" id="ENSGT00940000161650"/>
<dbReference type="HOGENOM" id="CLU_016170_1_0_1"/>
<dbReference type="InParanoid" id="O88338"/>
<dbReference type="OMA" id="INLPTVC"/>
<dbReference type="OrthoDB" id="8804268at2759"/>
<dbReference type="PhylomeDB" id="O88338"/>
<dbReference type="TreeFam" id="TF316817"/>
<dbReference type="BioGRID-ORCS" id="12556">
    <property type="hits" value="4 hits in 77 CRISPR screens"/>
</dbReference>
<dbReference type="PRO" id="PR:O88338"/>
<dbReference type="Proteomes" id="UP000000589">
    <property type="component" value="Chromosome 8"/>
</dbReference>
<dbReference type="RNAct" id="O88338">
    <property type="molecule type" value="protein"/>
</dbReference>
<dbReference type="Bgee" id="ENSMUSG00000031881">
    <property type="expression patterns" value="Expressed in adult mammalian kidney and 66 other cell types or tissues"/>
</dbReference>
<dbReference type="ExpressionAtlas" id="O88338">
    <property type="expression patterns" value="baseline and differential"/>
</dbReference>
<dbReference type="GO" id="GO:0016323">
    <property type="term" value="C:basolateral plasma membrane"/>
    <property type="evidence" value="ECO:0000314"/>
    <property type="project" value="MGI"/>
</dbReference>
<dbReference type="GO" id="GO:0005886">
    <property type="term" value="C:plasma membrane"/>
    <property type="evidence" value="ECO:0000314"/>
    <property type="project" value="MGI"/>
</dbReference>
<dbReference type="GO" id="GO:0005509">
    <property type="term" value="F:calcium ion binding"/>
    <property type="evidence" value="ECO:0007669"/>
    <property type="project" value="InterPro"/>
</dbReference>
<dbReference type="GO" id="GO:0016339">
    <property type="term" value="P:calcium-dependent cell-cell adhesion via plasma membrane cell adhesion molecules"/>
    <property type="evidence" value="ECO:0000314"/>
    <property type="project" value="MGI"/>
</dbReference>
<dbReference type="GO" id="GO:0007156">
    <property type="term" value="P:homophilic cell adhesion via plasma membrane adhesion molecules"/>
    <property type="evidence" value="ECO:0007669"/>
    <property type="project" value="InterPro"/>
</dbReference>
<dbReference type="CDD" id="cd11304">
    <property type="entry name" value="Cadherin_repeat"/>
    <property type="match status" value="6"/>
</dbReference>
<dbReference type="FunFam" id="2.60.40.60:FF:000167">
    <property type="entry name" value="Cadherin 16"/>
    <property type="match status" value="1"/>
</dbReference>
<dbReference type="FunFam" id="2.60.40.60:FF:000187">
    <property type="entry name" value="Cadherin 16"/>
    <property type="match status" value="1"/>
</dbReference>
<dbReference type="FunFam" id="2.60.40.60:FF:000195">
    <property type="entry name" value="Cadherin 16"/>
    <property type="match status" value="1"/>
</dbReference>
<dbReference type="FunFam" id="2.60.40.60:FF:000240">
    <property type="entry name" value="Cadherin 16"/>
    <property type="match status" value="1"/>
</dbReference>
<dbReference type="FunFam" id="2.60.40.60:FF:000241">
    <property type="entry name" value="Cadherin 16"/>
    <property type="match status" value="1"/>
</dbReference>
<dbReference type="FunFam" id="2.60.40.60:FF:000149">
    <property type="entry name" value="cadherin-16 isoform X1"/>
    <property type="match status" value="1"/>
</dbReference>
<dbReference type="FunFam" id="2.60.40.60:FF:000159">
    <property type="entry name" value="cadherin-16 isoform X1"/>
    <property type="match status" value="1"/>
</dbReference>
<dbReference type="Gene3D" id="2.60.40.60">
    <property type="entry name" value="Cadherins"/>
    <property type="match status" value="7"/>
</dbReference>
<dbReference type="InterPro" id="IPR039808">
    <property type="entry name" value="Cadherin"/>
</dbReference>
<dbReference type="InterPro" id="IPR002126">
    <property type="entry name" value="Cadherin-like_dom"/>
</dbReference>
<dbReference type="InterPro" id="IPR015919">
    <property type="entry name" value="Cadherin-like_sf"/>
</dbReference>
<dbReference type="PANTHER" id="PTHR24027:SF424">
    <property type="entry name" value="CADHERIN-16 ISOFORM X3"/>
    <property type="match status" value="1"/>
</dbReference>
<dbReference type="PANTHER" id="PTHR24027">
    <property type="entry name" value="CADHERIN-23"/>
    <property type="match status" value="1"/>
</dbReference>
<dbReference type="Pfam" id="PF00028">
    <property type="entry name" value="Cadherin"/>
    <property type="match status" value="3"/>
</dbReference>
<dbReference type="PRINTS" id="PR00205">
    <property type="entry name" value="CADHERIN"/>
</dbReference>
<dbReference type="SMART" id="SM00112">
    <property type="entry name" value="CA"/>
    <property type="match status" value="6"/>
</dbReference>
<dbReference type="SUPFAM" id="SSF49313">
    <property type="entry name" value="Cadherin-like"/>
    <property type="match status" value="6"/>
</dbReference>
<dbReference type="PROSITE" id="PS00232">
    <property type="entry name" value="CADHERIN_1"/>
    <property type="match status" value="1"/>
</dbReference>
<dbReference type="PROSITE" id="PS50268">
    <property type="entry name" value="CADHERIN_2"/>
    <property type="match status" value="5"/>
</dbReference>
<gene>
    <name type="primary">Cdh16</name>
</gene>
<protein>
    <recommendedName>
        <fullName>Cadherin-16</fullName>
    </recommendedName>
    <alternativeName>
        <fullName>Kidney-specific cadherin</fullName>
        <shortName>Ksp-cadherin</shortName>
    </alternativeName>
</protein>
<sequence>MISARPWLLYLSVIQAFTTEAQPAESLHTEVPENYGGNFPFYILKLPLPLGRDEGHIVLSGDSNTADQNTFAVDTDSGFLVATRTLDREEKAEYQLQVTLESEDGRILWGPQLVTVHVKDENDQVPQFSQAIYRAQLSQGTRPGVPFLFLEASDGDAPGTANSDLRFHILSQSPPQPLPDMFQLDPHLGALALSPSGSTSLDHALEETYQLLVQVKDMGDQPSGHQAIATVEISIVENSWAPLEPVHLAENLKVVYPHSIAQVHWSGGDVHYQLESQPPGPFDVDTEGMLHVTMELDREAQAEYQLQVRAQNSHGEDYAEPLELQVVVMDENDNAPVCSPHDPTVNIPELSPPGTEIARLSAEDLDAPGSPNSHIVYQLLSPEPEEGAENKAFELDPTSGSVTLGTAPLHAGQSILLQVLAVDLAGSESGLSSTCEVTVMVTDVNNHAPEFINSQIGPVTLPEDVKPGALVATLMATDADLEPAFRLMDFAIEEGDPEGIFDLSWEPDSDHVQLRLRKNLSYEAAPDHKVVVVVSNIEELVGPGPGPAATATVTILVERVVAPLKLDQESYETSIPVSTPAGSLLLTIQPSDPMSRTLRFSLVNDSEGWLCIKEVSGEVHTAQSLQGAQPGDTYTVLVEAQDTDKPGLSTSATVVIHFLKASPVPALTLSAGPSRHLCTPRQDYGVVVSGVSEDPDLANRNGPYSFALGPNPTVQRDWRLQPLNDSHAYLTLALHWVEPGEYMVPVVVHHDTHMWQLQVKVIVCRCNVEGQCMRKVGRMKGMPTKLSAVGVLLGTLAAIGFILILVFTHLALARKDLDQPADSVPLKAAV</sequence>
<reference key="1">
    <citation type="journal article" date="1998" name="Genomics">
        <title>cDNA cloning and chromosomal localization of the human and mouse isoforms of Ksp-cadherin.</title>
        <authorList>
            <person name="Thomson R.B."/>
            <person name="Ward D.C."/>
            <person name="Quaggin S.E."/>
            <person name="Igarashi P."/>
            <person name="Muckler Z.E."/>
            <person name="Aronson P.S."/>
        </authorList>
    </citation>
    <scope>NUCLEOTIDE SEQUENCE [MRNA]</scope>
    <source>
        <strain>BALB/cJ</strain>
    </source>
</reference>
<reference key="2">
    <citation type="journal article" date="2004" name="Genome Res.">
        <title>The status, quality, and expansion of the NIH full-length cDNA project: the Mammalian Gene Collection (MGC).</title>
        <authorList>
            <consortium name="The MGC Project Team"/>
        </authorList>
    </citation>
    <scope>NUCLEOTIDE SEQUENCE [LARGE SCALE MRNA]</scope>
    <source>
        <tissue>Kidney</tissue>
    </source>
</reference>
<reference key="3">
    <citation type="journal article" date="1999" name="Am. J. Physiol.">
        <title>Ksp-cadherin gene promoter. I. Characterization and renal epithelial cell-specific activity.</title>
        <authorList>
            <person name="Whyte D.A."/>
            <person name="Li C."/>
            <person name="Thomson R.B."/>
            <person name="Nix S.L."/>
            <person name="Zanjani R."/>
            <person name="Karp S.L."/>
            <person name="Aronson P.S."/>
            <person name="Igarashi P."/>
        </authorList>
    </citation>
    <scope>NUCLEOTIDE SEQUENCE OF 1-25</scope>
    <source>
        <strain>129/Sv</strain>
    </source>
</reference>
<reference key="4">
    <citation type="journal article" date="2010" name="Cell">
        <title>A tissue-specific atlas of mouse protein phosphorylation and expression.</title>
        <authorList>
            <person name="Huttlin E.L."/>
            <person name="Jedrychowski M.P."/>
            <person name="Elias J.E."/>
            <person name="Goswami T."/>
            <person name="Rad R."/>
            <person name="Beausoleil S.A."/>
            <person name="Villen J."/>
            <person name="Haas W."/>
            <person name="Sowa M.E."/>
            <person name="Gygi S.P."/>
        </authorList>
    </citation>
    <scope>PHOSPHORYLATION [LARGE SCALE ANALYSIS] AT SER-823</scope>
    <scope>IDENTIFICATION BY MASS SPECTROMETRY [LARGE SCALE ANALYSIS]</scope>
    <source>
        <tissue>Kidney</tissue>
        <tissue>Liver</tissue>
    </source>
</reference>
<organism>
    <name type="scientific">Mus musculus</name>
    <name type="common">Mouse</name>
    <dbReference type="NCBI Taxonomy" id="10090"/>
    <lineage>
        <taxon>Eukaryota</taxon>
        <taxon>Metazoa</taxon>
        <taxon>Chordata</taxon>
        <taxon>Craniata</taxon>
        <taxon>Vertebrata</taxon>
        <taxon>Euteleostomi</taxon>
        <taxon>Mammalia</taxon>
        <taxon>Eutheria</taxon>
        <taxon>Euarchontoglires</taxon>
        <taxon>Glires</taxon>
        <taxon>Rodentia</taxon>
        <taxon>Myomorpha</taxon>
        <taxon>Muroidea</taxon>
        <taxon>Muridae</taxon>
        <taxon>Murinae</taxon>
        <taxon>Mus</taxon>
        <taxon>Mus</taxon>
    </lineage>
</organism>
<feature type="signal peptide" evidence="2">
    <location>
        <begin position="1"/>
        <end position="21"/>
    </location>
</feature>
<feature type="chain" id="PRO_0000003810" description="Cadherin-16">
    <location>
        <begin position="22"/>
        <end position="830"/>
    </location>
</feature>
<feature type="topological domain" description="Extracellular" evidence="2">
    <location>
        <begin position="22"/>
        <end position="788"/>
    </location>
</feature>
<feature type="transmembrane region" description="Helical" evidence="2">
    <location>
        <begin position="789"/>
        <end position="809"/>
    </location>
</feature>
<feature type="topological domain" description="Cytoplasmic" evidence="2">
    <location>
        <begin position="810"/>
        <end position="830"/>
    </location>
</feature>
<feature type="domain" description="Cadherin 1" evidence="3">
    <location>
        <begin position="27"/>
        <end position="128"/>
    </location>
</feature>
<feature type="domain" description="Cadherin 2" evidence="3">
    <location>
        <begin position="133"/>
        <end position="237"/>
    </location>
</feature>
<feature type="domain" description="Cadherin 3" evidence="3">
    <location>
        <begin position="244"/>
        <end position="338"/>
    </location>
</feature>
<feature type="domain" description="Cadherin 4" evidence="3">
    <location>
        <begin position="343"/>
        <end position="451"/>
    </location>
</feature>
<feature type="domain" description="Cadherin 5" evidence="3">
    <location>
        <begin position="457"/>
        <end position="566"/>
    </location>
</feature>
<feature type="domain" description="Cadherin 6" evidence="3">
    <location>
        <begin position="571"/>
        <end position="667"/>
    </location>
</feature>
<feature type="region of interest" description="Ectodomain G">
    <location>
        <begin position="668"/>
        <end position="788"/>
    </location>
</feature>
<feature type="modified residue" description="Phosphoserine" evidence="5">
    <location>
        <position position="823"/>
    </location>
</feature>
<feature type="glycosylation site" description="N-linked (GlcNAc...) asparagine" evidence="2">
    <location>
        <position position="519"/>
    </location>
</feature>
<feature type="glycosylation site" description="N-linked (GlcNAc...) asparagine" evidence="2">
    <location>
        <position position="604"/>
    </location>
</feature>
<feature type="glycosylation site" description="N-linked (GlcNAc...) asparagine" evidence="2">
    <location>
        <position position="724"/>
    </location>
</feature>
<name>CAD16_MOUSE</name>
<accession>O88338</accession>
<accession>Q9JLZ5</accession>
<comment type="function">
    <text>Cadherins are calcium-dependent cell adhesion proteins. They preferentially interact with themselves in a homophilic manner in connecting cells; cadherins may thus contribute to the sorting of heterogeneous cell types.</text>
</comment>
<comment type="subcellular location">
    <subcellularLocation>
        <location evidence="4">Cell membrane</location>
        <topology evidence="4">Single-pass type I membrane protein</topology>
    </subcellularLocation>
</comment>
<comment type="tissue specificity">
    <text>Kidney specific.</text>
</comment>
<comment type="domain">
    <text evidence="1">Three calcium ions are usually bound at the interface of each cadherin domain and rigidify the connections, imparting a strong curvature to the full-length ectodomain.</text>
</comment>
<proteinExistence type="evidence at protein level"/>
<evidence type="ECO:0000250" key="1"/>
<evidence type="ECO:0000255" key="2"/>
<evidence type="ECO:0000255" key="3">
    <source>
        <dbReference type="PROSITE-ProRule" id="PRU00043"/>
    </source>
</evidence>
<evidence type="ECO:0000305" key="4"/>
<evidence type="ECO:0007744" key="5">
    <source>
    </source>
</evidence>